<reference key="1">
    <citation type="journal article" date="1993" name="Enzyme Protein">
        <title>Characterization of mouse proteasome subunit MC3 and identification of proteasome subtypes with different cleavage characteristics. Proteasome subunits, proteasome subpopulations.</title>
        <authorList>
            <person name="Seelig A."/>
            <person name="Boes B."/>
            <person name="Kloetzel P.-M."/>
        </authorList>
    </citation>
    <scope>NUCLEOTIDE SEQUENCE [MRNA]</scope>
</reference>
<reference key="2">
    <citation type="journal article" date="1999" name="Immunogenetics">
        <title>The complete primary structure of mouse 20S proteasomes.</title>
        <authorList>
            <person name="Elenich L.A."/>
            <person name="Nandi D."/>
            <person name="Kent E.A."/>
            <person name="McCluskey T.S."/>
            <person name="Cruz M."/>
            <person name="Iyer M.N."/>
            <person name="Woodward E.C."/>
            <person name="Conn C.W."/>
            <person name="Ochoa A.L."/>
            <person name="Ginsburg D.B."/>
            <person name="Monaco J.J."/>
        </authorList>
    </citation>
    <scope>NUCLEOTIDE SEQUENCE [MRNA]</scope>
</reference>
<reference key="3">
    <citation type="journal article" date="2005" name="Science">
        <title>The transcriptional landscape of the mammalian genome.</title>
        <authorList>
            <person name="Carninci P."/>
            <person name="Kasukawa T."/>
            <person name="Katayama S."/>
            <person name="Gough J."/>
            <person name="Frith M.C."/>
            <person name="Maeda N."/>
            <person name="Oyama R."/>
            <person name="Ravasi T."/>
            <person name="Lenhard B."/>
            <person name="Wells C."/>
            <person name="Kodzius R."/>
            <person name="Shimokawa K."/>
            <person name="Bajic V.B."/>
            <person name="Brenner S.E."/>
            <person name="Batalov S."/>
            <person name="Forrest A.R."/>
            <person name="Zavolan M."/>
            <person name="Davis M.J."/>
            <person name="Wilming L.G."/>
            <person name="Aidinis V."/>
            <person name="Allen J.E."/>
            <person name="Ambesi-Impiombato A."/>
            <person name="Apweiler R."/>
            <person name="Aturaliya R.N."/>
            <person name="Bailey T.L."/>
            <person name="Bansal M."/>
            <person name="Baxter L."/>
            <person name="Beisel K.W."/>
            <person name="Bersano T."/>
            <person name="Bono H."/>
            <person name="Chalk A.M."/>
            <person name="Chiu K.P."/>
            <person name="Choudhary V."/>
            <person name="Christoffels A."/>
            <person name="Clutterbuck D.R."/>
            <person name="Crowe M.L."/>
            <person name="Dalla E."/>
            <person name="Dalrymple B.P."/>
            <person name="de Bono B."/>
            <person name="Della Gatta G."/>
            <person name="di Bernardo D."/>
            <person name="Down T."/>
            <person name="Engstrom P."/>
            <person name="Fagiolini M."/>
            <person name="Faulkner G."/>
            <person name="Fletcher C.F."/>
            <person name="Fukushima T."/>
            <person name="Furuno M."/>
            <person name="Futaki S."/>
            <person name="Gariboldi M."/>
            <person name="Georgii-Hemming P."/>
            <person name="Gingeras T.R."/>
            <person name="Gojobori T."/>
            <person name="Green R.E."/>
            <person name="Gustincich S."/>
            <person name="Harbers M."/>
            <person name="Hayashi Y."/>
            <person name="Hensch T.K."/>
            <person name="Hirokawa N."/>
            <person name="Hill D."/>
            <person name="Huminiecki L."/>
            <person name="Iacono M."/>
            <person name="Ikeo K."/>
            <person name="Iwama A."/>
            <person name="Ishikawa T."/>
            <person name="Jakt M."/>
            <person name="Kanapin A."/>
            <person name="Katoh M."/>
            <person name="Kawasawa Y."/>
            <person name="Kelso J."/>
            <person name="Kitamura H."/>
            <person name="Kitano H."/>
            <person name="Kollias G."/>
            <person name="Krishnan S.P."/>
            <person name="Kruger A."/>
            <person name="Kummerfeld S.K."/>
            <person name="Kurochkin I.V."/>
            <person name="Lareau L.F."/>
            <person name="Lazarevic D."/>
            <person name="Lipovich L."/>
            <person name="Liu J."/>
            <person name="Liuni S."/>
            <person name="McWilliam S."/>
            <person name="Madan Babu M."/>
            <person name="Madera M."/>
            <person name="Marchionni L."/>
            <person name="Matsuda H."/>
            <person name="Matsuzawa S."/>
            <person name="Miki H."/>
            <person name="Mignone F."/>
            <person name="Miyake S."/>
            <person name="Morris K."/>
            <person name="Mottagui-Tabar S."/>
            <person name="Mulder N."/>
            <person name="Nakano N."/>
            <person name="Nakauchi H."/>
            <person name="Ng P."/>
            <person name="Nilsson R."/>
            <person name="Nishiguchi S."/>
            <person name="Nishikawa S."/>
            <person name="Nori F."/>
            <person name="Ohara O."/>
            <person name="Okazaki Y."/>
            <person name="Orlando V."/>
            <person name="Pang K.C."/>
            <person name="Pavan W.J."/>
            <person name="Pavesi G."/>
            <person name="Pesole G."/>
            <person name="Petrovsky N."/>
            <person name="Piazza S."/>
            <person name="Reed J."/>
            <person name="Reid J.F."/>
            <person name="Ring B.Z."/>
            <person name="Ringwald M."/>
            <person name="Rost B."/>
            <person name="Ruan Y."/>
            <person name="Salzberg S.L."/>
            <person name="Sandelin A."/>
            <person name="Schneider C."/>
            <person name="Schoenbach C."/>
            <person name="Sekiguchi K."/>
            <person name="Semple C.A."/>
            <person name="Seno S."/>
            <person name="Sessa L."/>
            <person name="Sheng Y."/>
            <person name="Shibata Y."/>
            <person name="Shimada H."/>
            <person name="Shimada K."/>
            <person name="Silva D."/>
            <person name="Sinclair B."/>
            <person name="Sperling S."/>
            <person name="Stupka E."/>
            <person name="Sugiura K."/>
            <person name="Sultana R."/>
            <person name="Takenaka Y."/>
            <person name="Taki K."/>
            <person name="Tammoja K."/>
            <person name="Tan S.L."/>
            <person name="Tang S."/>
            <person name="Taylor M.S."/>
            <person name="Tegner J."/>
            <person name="Teichmann S.A."/>
            <person name="Ueda H.R."/>
            <person name="van Nimwegen E."/>
            <person name="Verardo R."/>
            <person name="Wei C.L."/>
            <person name="Yagi K."/>
            <person name="Yamanishi H."/>
            <person name="Zabarovsky E."/>
            <person name="Zhu S."/>
            <person name="Zimmer A."/>
            <person name="Hide W."/>
            <person name="Bult C."/>
            <person name="Grimmond S.M."/>
            <person name="Teasdale R.D."/>
            <person name="Liu E.T."/>
            <person name="Brusic V."/>
            <person name="Quackenbush J."/>
            <person name="Wahlestedt C."/>
            <person name="Mattick J.S."/>
            <person name="Hume D.A."/>
            <person name="Kai C."/>
            <person name="Sasaki D."/>
            <person name="Tomaru Y."/>
            <person name="Fukuda S."/>
            <person name="Kanamori-Katayama M."/>
            <person name="Suzuki M."/>
            <person name="Aoki J."/>
            <person name="Arakawa T."/>
            <person name="Iida J."/>
            <person name="Imamura K."/>
            <person name="Itoh M."/>
            <person name="Kato T."/>
            <person name="Kawaji H."/>
            <person name="Kawagashira N."/>
            <person name="Kawashima T."/>
            <person name="Kojima M."/>
            <person name="Kondo S."/>
            <person name="Konno H."/>
            <person name="Nakano K."/>
            <person name="Ninomiya N."/>
            <person name="Nishio T."/>
            <person name="Okada M."/>
            <person name="Plessy C."/>
            <person name="Shibata K."/>
            <person name="Shiraki T."/>
            <person name="Suzuki S."/>
            <person name="Tagami M."/>
            <person name="Waki K."/>
            <person name="Watahiki A."/>
            <person name="Okamura-Oho Y."/>
            <person name="Suzuki H."/>
            <person name="Kawai J."/>
            <person name="Hayashizaki Y."/>
        </authorList>
    </citation>
    <scope>NUCLEOTIDE SEQUENCE [LARGE SCALE MRNA]</scope>
    <source>
        <strain>BALB/cJ</strain>
        <strain>C57BL/6J</strain>
        <strain>NOD</strain>
        <tissue>Bone marrow</tissue>
        <tissue>Thymus</tissue>
        <tissue>Urinary bladder</tissue>
    </source>
</reference>
<reference key="4">
    <citation type="journal article" date="2009" name="PLoS Biol.">
        <title>Lineage-specific biology revealed by a finished genome assembly of the mouse.</title>
        <authorList>
            <person name="Church D.M."/>
            <person name="Goodstadt L."/>
            <person name="Hillier L.W."/>
            <person name="Zody M.C."/>
            <person name="Goldstein S."/>
            <person name="She X."/>
            <person name="Bult C.J."/>
            <person name="Agarwala R."/>
            <person name="Cherry J.L."/>
            <person name="DiCuccio M."/>
            <person name="Hlavina W."/>
            <person name="Kapustin Y."/>
            <person name="Meric P."/>
            <person name="Maglott D."/>
            <person name="Birtle Z."/>
            <person name="Marques A.C."/>
            <person name="Graves T."/>
            <person name="Zhou S."/>
            <person name="Teague B."/>
            <person name="Potamousis K."/>
            <person name="Churas C."/>
            <person name="Place M."/>
            <person name="Herschleb J."/>
            <person name="Runnheim R."/>
            <person name="Forrest D."/>
            <person name="Amos-Landgraf J."/>
            <person name="Schwartz D.C."/>
            <person name="Cheng Z."/>
            <person name="Lindblad-Toh K."/>
            <person name="Eichler E.E."/>
            <person name="Ponting C.P."/>
        </authorList>
    </citation>
    <scope>NUCLEOTIDE SEQUENCE [LARGE SCALE GENOMIC DNA]</scope>
    <source>
        <strain>C57BL/6J</strain>
    </source>
</reference>
<reference key="5">
    <citation type="submission" date="2005-07" db="EMBL/GenBank/DDBJ databases">
        <authorList>
            <person name="Mural R.J."/>
            <person name="Adams M.D."/>
            <person name="Myers E.W."/>
            <person name="Smith H.O."/>
            <person name="Venter J.C."/>
        </authorList>
    </citation>
    <scope>NUCLEOTIDE SEQUENCE [LARGE SCALE GENOMIC DNA]</scope>
</reference>
<reference key="6">
    <citation type="journal article" date="2004" name="Genome Res.">
        <title>The status, quality, and expansion of the NIH full-length cDNA project: the Mammalian Gene Collection (MGC).</title>
        <authorList>
            <consortium name="The MGC Project Team"/>
        </authorList>
    </citation>
    <scope>NUCLEOTIDE SEQUENCE [LARGE SCALE MRNA]</scope>
    <source>
        <strain>FVB/N</strain>
        <tissue>Mammary tumor</tissue>
    </source>
</reference>
<reference key="7">
    <citation type="submission" date="2007-07" db="UniProtKB">
        <authorList>
            <person name="Lubec G."/>
            <person name="Kang S.U."/>
            <person name="Klug S."/>
            <person name="Yang J.W."/>
            <person name="Zigmond M."/>
        </authorList>
    </citation>
    <scope>PROTEIN SEQUENCE OF 5-39; 71-84; 93-113 AND 178-196</scope>
    <scope>IDENTIFICATION BY MASS SPECTROMETRY</scope>
    <source>
        <strain>C57BL/6J</strain>
        <tissue>Brain</tissue>
        <tissue>Hippocampus</tissue>
    </source>
</reference>
<reference key="8">
    <citation type="journal article" date="2006" name="Circ. Res.">
        <title>Mapping the murine cardiac 26S proteasome complexes.</title>
        <authorList>
            <person name="Gomes A.V."/>
            <person name="Zong C."/>
            <person name="Edmondson R.D."/>
            <person name="Li X."/>
            <person name="Stefani E."/>
            <person name="Zhang J."/>
            <person name="Jones R.C."/>
            <person name="Thyparambil S."/>
            <person name="Wang G.W."/>
            <person name="Qiao X."/>
            <person name="Bardag-Gorce F."/>
            <person name="Ping P."/>
        </authorList>
    </citation>
    <scope>IDENTIFICATION IN THE 20S PROTEASOME CORE COMPLEX</scope>
    <scope>ACETYLATION AT ALA-2</scope>
</reference>
<reference key="9">
    <citation type="journal article" date="2006" name="Mol. Cell. Biol.">
        <title>Proteasome activator PA200 is required for normal spermatogenesis.</title>
        <authorList>
            <person name="Khor B."/>
            <person name="Bredemeyer A.L."/>
            <person name="Huang C.-Y."/>
            <person name="Turnbull I.R."/>
            <person name="Evans R."/>
            <person name="Maggi L.B. Jr."/>
            <person name="White J.M."/>
            <person name="Walker L.M."/>
            <person name="Carnes K."/>
            <person name="Hess R.A."/>
            <person name="Sleckman B.P."/>
        </authorList>
    </citation>
    <scope>FUNCTION</scope>
</reference>
<reference key="10">
    <citation type="journal article" date="2008" name="J. Proteome Res.">
        <title>Large-scale identification and evolution indexing of tyrosine phosphorylation sites from murine brain.</title>
        <authorList>
            <person name="Ballif B.A."/>
            <person name="Carey G.R."/>
            <person name="Sunyaev S.R."/>
            <person name="Gygi S.P."/>
        </authorList>
    </citation>
    <scope>PHOSPHORYLATION [LARGE SCALE ANALYSIS] AT TYR-76</scope>
    <scope>IDENTIFICATION BY MASS SPECTROMETRY [LARGE SCALE ANALYSIS]</scope>
    <source>
        <tissue>Brain</tissue>
    </source>
</reference>
<reference key="11">
    <citation type="journal article" date="2010" name="Cell">
        <title>A tissue-specific atlas of mouse protein phosphorylation and expression.</title>
        <authorList>
            <person name="Huttlin E.L."/>
            <person name="Jedrychowski M.P."/>
            <person name="Elias J.E."/>
            <person name="Goswami T."/>
            <person name="Rad R."/>
            <person name="Beausoleil S.A."/>
            <person name="Villen J."/>
            <person name="Haas W."/>
            <person name="Sowa M.E."/>
            <person name="Gygi S.P."/>
        </authorList>
    </citation>
    <scope>PHOSPHORYLATION [LARGE SCALE ANALYSIS] AT TYR-6</scope>
    <scope>IDENTIFICATION BY MASS SPECTROMETRY [LARGE SCALE ANALYSIS]</scope>
    <source>
        <tissue>Brain</tissue>
        <tissue>Brown adipose tissue</tissue>
        <tissue>Heart</tissue>
        <tissue>Kidney</tissue>
        <tissue>Liver</tissue>
        <tissue>Lung</tissue>
        <tissue>Pancreas</tissue>
        <tissue>Spleen</tissue>
        <tissue>Testis</tissue>
    </source>
</reference>
<reference key="12">
    <citation type="journal article" date="2011" name="Retrovirology">
        <title>TRIM5alpha associates with proteasomal subunits in cells while in complex with HIV-1 virions.</title>
        <authorList>
            <person name="Lukic Z."/>
            <person name="Hausmann S."/>
            <person name="Sebastian S."/>
            <person name="Rucci J."/>
            <person name="Sastri J."/>
            <person name="Robia S.L."/>
            <person name="Luban J."/>
            <person name="Campbell E.M."/>
        </authorList>
    </citation>
    <scope>SUBCELLULAR LOCATION</scope>
</reference>
<reference key="13">
    <citation type="journal article" date="2013" name="Mol. Cell">
        <title>SIRT5-mediated lysine desuccinylation impacts diverse metabolic pathways.</title>
        <authorList>
            <person name="Park J."/>
            <person name="Chen Y."/>
            <person name="Tishkoff D.X."/>
            <person name="Peng C."/>
            <person name="Tan M."/>
            <person name="Dai L."/>
            <person name="Xie Z."/>
            <person name="Zhang Y."/>
            <person name="Zwaans B.M."/>
            <person name="Skinner M.E."/>
            <person name="Lombard D.B."/>
            <person name="Zhao Y."/>
        </authorList>
    </citation>
    <scope>ACETYLATION [LARGE SCALE ANALYSIS] AT LYS-171</scope>
    <scope>IDENTIFICATION BY MASS SPECTROMETRY [LARGE SCALE ANALYSIS]</scope>
    <source>
        <tissue>Embryonic fibroblast</tissue>
    </source>
</reference>
<reference key="14">
    <citation type="journal article" date="2012" name="Cell">
        <title>Immuno- and constitutive proteasome crystal structures reveal differences in substrate and inhibitor specificity.</title>
        <authorList>
            <person name="Huber E.M."/>
            <person name="Basler M."/>
            <person name="Schwab R."/>
            <person name="Heinemeyer W."/>
            <person name="Kirk C.J."/>
            <person name="Groettrup M."/>
            <person name="Groll M."/>
        </authorList>
    </citation>
    <scope>X-RAY CRYSTALLOGRAPHY (2.90 ANGSTROMS) OF 20S IMMUNOPROTEASOME</scope>
    <scope>SUBUNIT</scope>
    <scope>FUNCTION</scope>
    <scope>TISSUE SPECIFICITY</scope>
</reference>
<feature type="initiator methionine" description="Removed" evidence="9">
    <location>
        <position position="1"/>
    </location>
</feature>
<feature type="chain" id="PRO_0000124078" description="Proteasome subunit alpha type-2">
    <location>
        <begin position="2"/>
        <end position="234"/>
    </location>
</feature>
<feature type="modified residue" description="N-acetylalanine" evidence="5">
    <location>
        <position position="2"/>
    </location>
</feature>
<feature type="modified residue" description="Phosphotyrosine" evidence="11">
    <location>
        <position position="6"/>
    </location>
</feature>
<feature type="modified residue" description="Phosphoserine" evidence="2">
    <location>
        <position position="7"/>
    </location>
</feature>
<feature type="modified residue" description="Phosphoserine" evidence="2">
    <location>
        <position position="14"/>
    </location>
</feature>
<feature type="modified residue" description="Phosphoserine" evidence="2">
    <location>
        <position position="16"/>
    </location>
</feature>
<feature type="modified residue" description="Phosphotyrosine" evidence="2">
    <location>
        <position position="24"/>
    </location>
</feature>
<feature type="modified residue" description="N6-acetyllysine" evidence="2">
    <location>
        <position position="70"/>
    </location>
</feature>
<feature type="modified residue" description="Phosphotyrosine" evidence="10">
    <location>
        <position position="76"/>
    </location>
</feature>
<feature type="modified residue" description="Phosphotyrosine" evidence="1">
    <location>
        <position position="121"/>
    </location>
</feature>
<feature type="modified residue" description="N6-acetyllysine" evidence="12">
    <location>
        <position position="171"/>
    </location>
</feature>
<feature type="sequence conflict" description="In Ref. 1; CAA49782." evidence="8" ref="1">
    <original>E</original>
    <variation>K</variation>
    <location>
        <position position="3"/>
    </location>
</feature>
<feature type="strand" evidence="15">
    <location>
        <begin position="8"/>
        <end position="10"/>
    </location>
</feature>
<feature type="strand" evidence="14">
    <location>
        <begin position="15"/>
        <end position="17"/>
    </location>
</feature>
<feature type="helix" evidence="13">
    <location>
        <begin position="20"/>
        <end position="30"/>
    </location>
</feature>
<feature type="strand" evidence="13">
    <location>
        <begin position="35"/>
        <end position="39"/>
    </location>
</feature>
<feature type="strand" evidence="13">
    <location>
        <begin position="44"/>
        <end position="49"/>
    </location>
</feature>
<feature type="strand" evidence="13">
    <location>
        <begin position="53"/>
        <end position="55"/>
    </location>
</feature>
<feature type="helix" evidence="13">
    <location>
        <begin position="59"/>
        <end position="61"/>
    </location>
</feature>
<feature type="strand" evidence="13">
    <location>
        <begin position="64"/>
        <end position="69"/>
    </location>
</feature>
<feature type="strand" evidence="13">
    <location>
        <begin position="72"/>
        <end position="78"/>
    </location>
</feature>
<feature type="helix" evidence="13">
    <location>
        <begin position="80"/>
        <end position="101"/>
    </location>
</feature>
<feature type="helix" evidence="13">
    <location>
        <begin position="107"/>
        <end position="120"/>
    </location>
</feature>
<feature type="turn" evidence="13">
    <location>
        <begin position="121"/>
        <end position="123"/>
    </location>
</feature>
<feature type="strand" evidence="13">
    <location>
        <begin position="131"/>
        <end position="140"/>
    </location>
</feature>
<feature type="strand" evidence="13">
    <location>
        <begin position="143"/>
        <end position="149"/>
    </location>
</feature>
<feature type="strand" evidence="13">
    <location>
        <begin position="155"/>
        <end position="164"/>
    </location>
</feature>
<feature type="helix" evidence="13">
    <location>
        <begin position="167"/>
        <end position="177"/>
    </location>
</feature>
<feature type="helix" evidence="13">
    <location>
        <begin position="184"/>
        <end position="196"/>
    </location>
</feature>
<feature type="turn" evidence="13">
    <location>
        <begin position="205"/>
        <end position="207"/>
    </location>
</feature>
<feature type="strand" evidence="13">
    <location>
        <begin position="208"/>
        <end position="214"/>
    </location>
</feature>
<feature type="strand" evidence="13">
    <location>
        <begin position="217"/>
        <end position="220"/>
    </location>
</feature>
<feature type="helix" evidence="13">
    <location>
        <begin position="223"/>
        <end position="229"/>
    </location>
</feature>
<accession>P49722</accession>
<accession>E9Q3A4</accession>
<accession>Q6ZWV8</accession>
<gene>
    <name type="primary">Psma2</name>
    <name type="synonym">Lmpc3</name>
</gene>
<organism>
    <name type="scientific">Mus musculus</name>
    <name type="common">Mouse</name>
    <dbReference type="NCBI Taxonomy" id="10090"/>
    <lineage>
        <taxon>Eukaryota</taxon>
        <taxon>Metazoa</taxon>
        <taxon>Chordata</taxon>
        <taxon>Craniata</taxon>
        <taxon>Vertebrata</taxon>
        <taxon>Euteleostomi</taxon>
        <taxon>Mammalia</taxon>
        <taxon>Eutheria</taxon>
        <taxon>Euarchontoglires</taxon>
        <taxon>Glires</taxon>
        <taxon>Rodentia</taxon>
        <taxon>Myomorpha</taxon>
        <taxon>Muroidea</taxon>
        <taxon>Muridae</taxon>
        <taxon>Murinae</taxon>
        <taxon>Mus</taxon>
        <taxon>Mus</taxon>
    </lineage>
</organism>
<dbReference type="EMBL" id="X70303">
    <property type="protein sequence ID" value="CAA49782.1"/>
    <property type="molecule type" value="mRNA"/>
</dbReference>
<dbReference type="EMBL" id="AF099733">
    <property type="protein sequence ID" value="AAD50623.1"/>
    <property type="molecule type" value="mRNA"/>
</dbReference>
<dbReference type="EMBL" id="AK012119">
    <property type="protein sequence ID" value="BAB28045.1"/>
    <property type="molecule type" value="mRNA"/>
</dbReference>
<dbReference type="EMBL" id="AK035578">
    <property type="protein sequence ID" value="BAC29110.1"/>
    <property type="molecule type" value="mRNA"/>
</dbReference>
<dbReference type="EMBL" id="AK151883">
    <property type="protein sequence ID" value="BAE30769.1"/>
    <property type="molecule type" value="mRNA"/>
</dbReference>
<dbReference type="EMBL" id="AK152862">
    <property type="protein sequence ID" value="BAE31553.1"/>
    <property type="molecule type" value="mRNA"/>
</dbReference>
<dbReference type="EMBL" id="AK154011">
    <property type="protein sequence ID" value="BAE32314.1"/>
    <property type="molecule type" value="mRNA"/>
</dbReference>
<dbReference type="EMBL" id="AK167752">
    <property type="protein sequence ID" value="BAE39787.1"/>
    <property type="molecule type" value="mRNA"/>
</dbReference>
<dbReference type="EMBL" id="AC092710">
    <property type="status" value="NOT_ANNOTATED_CDS"/>
    <property type="molecule type" value="Genomic_DNA"/>
</dbReference>
<dbReference type="EMBL" id="CH466561">
    <property type="protein sequence ID" value="EDL32738.1"/>
    <property type="molecule type" value="Genomic_DNA"/>
</dbReference>
<dbReference type="EMBL" id="BC026768">
    <property type="protein sequence ID" value="AAH26768.1"/>
    <property type="molecule type" value="mRNA"/>
</dbReference>
<dbReference type="CCDS" id="CCDS36602.1"/>
<dbReference type="RefSeq" id="NP_032970.2">
    <property type="nucleotide sequence ID" value="NM_008944.2"/>
</dbReference>
<dbReference type="PDB" id="3UNB">
    <property type="method" value="X-ray"/>
    <property type="resolution" value="2.90 A"/>
    <property type="chains" value="A/O/c/q=1-234"/>
</dbReference>
<dbReference type="PDB" id="3UNE">
    <property type="method" value="X-ray"/>
    <property type="resolution" value="3.20 A"/>
    <property type="chains" value="A/O/c/q=1-234"/>
</dbReference>
<dbReference type="PDB" id="3UNF">
    <property type="method" value="X-ray"/>
    <property type="resolution" value="2.90 A"/>
    <property type="chains" value="A/O=1-234"/>
</dbReference>
<dbReference type="PDB" id="3UNH">
    <property type="method" value="X-ray"/>
    <property type="resolution" value="3.20 A"/>
    <property type="chains" value="A/O=1-234"/>
</dbReference>
<dbReference type="PDB" id="8YPK">
    <property type="method" value="EM"/>
    <property type="resolution" value="2.70 A"/>
    <property type="chains" value="P/b=1-234"/>
</dbReference>
<dbReference type="PDB" id="8YVP">
    <property type="method" value="EM"/>
    <property type="resolution" value="2.50 A"/>
    <property type="chains" value="P/b=1-234"/>
</dbReference>
<dbReference type="PDBsum" id="3UNB"/>
<dbReference type="PDBsum" id="3UNE"/>
<dbReference type="PDBsum" id="3UNF"/>
<dbReference type="PDBsum" id="3UNH"/>
<dbReference type="PDBsum" id="8YPK"/>
<dbReference type="PDBsum" id="8YVP"/>
<dbReference type="EMDB" id="EMD-39482"/>
<dbReference type="EMDB" id="EMD-39612"/>
<dbReference type="SMR" id="P49722"/>
<dbReference type="BioGRID" id="202416">
    <property type="interactions" value="63"/>
</dbReference>
<dbReference type="CORUM" id="P49722"/>
<dbReference type="FunCoup" id="P49722">
    <property type="interactions" value="3127"/>
</dbReference>
<dbReference type="IntAct" id="P49722">
    <property type="interactions" value="8"/>
</dbReference>
<dbReference type="STRING" id="10090.ENSMUSP00000129767"/>
<dbReference type="MEROPS" id="T01.972"/>
<dbReference type="iPTMnet" id="P49722"/>
<dbReference type="PhosphoSitePlus" id="P49722"/>
<dbReference type="SwissPalm" id="P49722"/>
<dbReference type="REPRODUCTION-2DPAGE" id="P49722"/>
<dbReference type="CPTAC" id="non-CPTAC-3940"/>
<dbReference type="jPOST" id="P49722"/>
<dbReference type="PaxDb" id="10090-ENSMUSP00000129767"/>
<dbReference type="PeptideAtlas" id="P49722"/>
<dbReference type="ProteomicsDB" id="291828"/>
<dbReference type="Pumba" id="P49722"/>
<dbReference type="TopDownProteomics" id="P49722"/>
<dbReference type="Antibodypedia" id="2176">
    <property type="antibodies" value="409 antibodies from 35 providers"/>
</dbReference>
<dbReference type="DNASU" id="19166"/>
<dbReference type="Ensembl" id="ENSMUST00000170836.4">
    <property type="protein sequence ID" value="ENSMUSP00000129767.3"/>
    <property type="gene ID" value="ENSMUSG00000015671.12"/>
</dbReference>
<dbReference type="GeneID" id="19166"/>
<dbReference type="KEGG" id="mmu:19166"/>
<dbReference type="UCSC" id="uc007pnl.1">
    <property type="organism name" value="mouse"/>
</dbReference>
<dbReference type="AGR" id="MGI:104885"/>
<dbReference type="CTD" id="5683"/>
<dbReference type="MGI" id="MGI:104885">
    <property type="gene designation" value="Psma2"/>
</dbReference>
<dbReference type="VEuPathDB" id="HostDB:ENSMUSG00000015671"/>
<dbReference type="eggNOG" id="KOG0181">
    <property type="taxonomic scope" value="Eukaryota"/>
</dbReference>
<dbReference type="GeneTree" id="ENSGT00550000074870"/>
<dbReference type="HOGENOM" id="CLU_035750_4_1_1"/>
<dbReference type="InParanoid" id="P49722"/>
<dbReference type="OMA" id="ATCIGKD"/>
<dbReference type="OrthoDB" id="431557at2759"/>
<dbReference type="PhylomeDB" id="P49722"/>
<dbReference type="TreeFam" id="TF106207"/>
<dbReference type="Reactome" id="R-MMU-1169091">
    <property type="pathway name" value="Activation of NF-kappaB in B cells"/>
</dbReference>
<dbReference type="Reactome" id="R-MMU-1234176">
    <property type="pathway name" value="Oxygen-dependent proline hydroxylation of Hypoxia-inducible Factor Alpha"/>
</dbReference>
<dbReference type="Reactome" id="R-MMU-1236978">
    <property type="pathway name" value="Cross-presentation of soluble exogenous antigens (endosomes)"/>
</dbReference>
<dbReference type="Reactome" id="R-MMU-174084">
    <property type="pathway name" value="Autodegradation of Cdh1 by Cdh1:APC/C"/>
</dbReference>
<dbReference type="Reactome" id="R-MMU-174154">
    <property type="pathway name" value="APC/C:Cdc20 mediated degradation of Securin"/>
</dbReference>
<dbReference type="Reactome" id="R-MMU-174178">
    <property type="pathway name" value="APC/C:Cdh1 mediated degradation of Cdc20 and other APC/C:Cdh1 targeted proteins in late mitosis/early G1"/>
</dbReference>
<dbReference type="Reactome" id="R-MMU-174184">
    <property type="pathway name" value="Cdc20:Phospho-APC/C mediated degradation of Cyclin A"/>
</dbReference>
<dbReference type="Reactome" id="R-MMU-187577">
    <property type="pathway name" value="SCF(Skp2)-mediated degradation of p27/p21"/>
</dbReference>
<dbReference type="Reactome" id="R-MMU-195253">
    <property type="pathway name" value="Degradation of beta-catenin by the destruction complex"/>
</dbReference>
<dbReference type="Reactome" id="R-MMU-202424">
    <property type="pathway name" value="Downstream TCR signaling"/>
</dbReference>
<dbReference type="Reactome" id="R-MMU-2467813">
    <property type="pathway name" value="Separation of Sister Chromatids"/>
</dbReference>
<dbReference type="Reactome" id="R-MMU-2871837">
    <property type="pathway name" value="FCERI mediated NF-kB activation"/>
</dbReference>
<dbReference type="Reactome" id="R-MMU-349425">
    <property type="pathway name" value="Autodegradation of the E3 ubiquitin ligase COP1"/>
</dbReference>
<dbReference type="Reactome" id="R-MMU-350562">
    <property type="pathway name" value="Regulation of ornithine decarboxylase (ODC)"/>
</dbReference>
<dbReference type="Reactome" id="R-MMU-382556">
    <property type="pathway name" value="ABC-family proteins mediated transport"/>
</dbReference>
<dbReference type="Reactome" id="R-MMU-450408">
    <property type="pathway name" value="AUF1 (hnRNP D0) binds and destabilizes mRNA"/>
</dbReference>
<dbReference type="Reactome" id="R-MMU-4608870">
    <property type="pathway name" value="Asymmetric localization of PCP proteins"/>
</dbReference>
<dbReference type="Reactome" id="R-MMU-4641257">
    <property type="pathway name" value="Degradation of AXIN"/>
</dbReference>
<dbReference type="Reactome" id="R-MMU-4641258">
    <property type="pathway name" value="Degradation of DVL"/>
</dbReference>
<dbReference type="Reactome" id="R-MMU-5358346">
    <property type="pathway name" value="Hedgehog ligand biogenesis"/>
</dbReference>
<dbReference type="Reactome" id="R-MMU-5607761">
    <property type="pathway name" value="Dectin-1 mediated noncanonical NF-kB signaling"/>
</dbReference>
<dbReference type="Reactome" id="R-MMU-5607764">
    <property type="pathway name" value="CLEC7A (Dectin-1) signaling"/>
</dbReference>
<dbReference type="Reactome" id="R-MMU-5610780">
    <property type="pathway name" value="Degradation of GLI1 by the proteasome"/>
</dbReference>
<dbReference type="Reactome" id="R-MMU-5610785">
    <property type="pathway name" value="GLI3 is processed to GLI3R by the proteasome"/>
</dbReference>
<dbReference type="Reactome" id="R-MMU-5632684">
    <property type="pathway name" value="Hedgehog 'on' state"/>
</dbReference>
<dbReference type="Reactome" id="R-MMU-5658442">
    <property type="pathway name" value="Regulation of RAS by GAPs"/>
</dbReference>
<dbReference type="Reactome" id="R-MMU-5668541">
    <property type="pathway name" value="TNFR2 non-canonical NF-kB pathway"/>
</dbReference>
<dbReference type="Reactome" id="R-MMU-5676590">
    <property type="pathway name" value="NIK--&gt;noncanonical NF-kB signaling"/>
</dbReference>
<dbReference type="Reactome" id="R-MMU-5687128">
    <property type="pathway name" value="MAPK6/MAPK4 signaling"/>
</dbReference>
<dbReference type="Reactome" id="R-MMU-5689603">
    <property type="pathway name" value="UCH proteinases"/>
</dbReference>
<dbReference type="Reactome" id="R-MMU-5689880">
    <property type="pathway name" value="Ub-specific processing proteases"/>
</dbReference>
<dbReference type="Reactome" id="R-MMU-6798695">
    <property type="pathway name" value="Neutrophil degranulation"/>
</dbReference>
<dbReference type="Reactome" id="R-MMU-68867">
    <property type="pathway name" value="Assembly of the pre-replicative complex"/>
</dbReference>
<dbReference type="Reactome" id="R-MMU-68949">
    <property type="pathway name" value="Orc1 removal from chromatin"/>
</dbReference>
<dbReference type="Reactome" id="R-MMU-69017">
    <property type="pathway name" value="CDK-mediated phosphorylation and removal of Cdc6"/>
</dbReference>
<dbReference type="Reactome" id="R-MMU-69481">
    <property type="pathway name" value="G2/M Checkpoints"/>
</dbReference>
<dbReference type="Reactome" id="R-MMU-69601">
    <property type="pathway name" value="Ubiquitin Mediated Degradation of Phosphorylated Cdc25A"/>
</dbReference>
<dbReference type="Reactome" id="R-MMU-75815">
    <property type="pathway name" value="Ubiquitin-dependent degradation of Cyclin D"/>
</dbReference>
<dbReference type="Reactome" id="R-MMU-8852276">
    <property type="pathway name" value="The role of GTSE1 in G2/M progression after G2 checkpoint"/>
</dbReference>
<dbReference type="Reactome" id="R-MMU-8854050">
    <property type="pathway name" value="FBXL7 down-regulates AURKA during mitotic entry and in early mitosis"/>
</dbReference>
<dbReference type="Reactome" id="R-MMU-8939236">
    <property type="pathway name" value="RUNX1 regulates transcription of genes involved in differentiation of HSCs"/>
</dbReference>
<dbReference type="Reactome" id="R-MMU-8939902">
    <property type="pathway name" value="Regulation of RUNX2 expression and activity"/>
</dbReference>
<dbReference type="Reactome" id="R-MMU-8941858">
    <property type="pathway name" value="Regulation of RUNX3 expression and activity"/>
</dbReference>
<dbReference type="Reactome" id="R-MMU-8948751">
    <property type="pathway name" value="Regulation of PTEN stability and activity"/>
</dbReference>
<dbReference type="Reactome" id="R-MMU-8951664">
    <property type="pathway name" value="Neddylation"/>
</dbReference>
<dbReference type="Reactome" id="R-MMU-9020702">
    <property type="pathway name" value="Interleukin-1 signaling"/>
</dbReference>
<dbReference type="Reactome" id="R-MMU-9755511">
    <property type="pathway name" value="KEAP1-NFE2L2 pathway"/>
</dbReference>
<dbReference type="Reactome" id="R-MMU-9762114">
    <property type="pathway name" value="GSK3B and BTRC:CUL1-mediated-degradation of NFE2L2"/>
</dbReference>
<dbReference type="Reactome" id="R-MMU-983168">
    <property type="pathway name" value="Antigen processing: Ubiquitination &amp; Proteasome degradation"/>
</dbReference>
<dbReference type="Reactome" id="R-MMU-9907900">
    <property type="pathway name" value="Proteasome assembly"/>
</dbReference>
<dbReference type="BioGRID-ORCS" id="19166">
    <property type="hits" value="30 hits in 75 CRISPR screens"/>
</dbReference>
<dbReference type="ChiTaRS" id="Psma2">
    <property type="organism name" value="mouse"/>
</dbReference>
<dbReference type="EvolutionaryTrace" id="P49722"/>
<dbReference type="PRO" id="PR:P49722"/>
<dbReference type="Proteomes" id="UP000000589">
    <property type="component" value="Chromosome 13"/>
</dbReference>
<dbReference type="RNAct" id="P49722">
    <property type="molecule type" value="protein"/>
</dbReference>
<dbReference type="Bgee" id="ENSMUSG00000015671">
    <property type="expression patterns" value="Expressed in somite and 259 other cell types or tissues"/>
</dbReference>
<dbReference type="ExpressionAtlas" id="P49722">
    <property type="expression patterns" value="baseline and differential"/>
</dbReference>
<dbReference type="GO" id="GO:0005829">
    <property type="term" value="C:cytosol"/>
    <property type="evidence" value="ECO:0000304"/>
    <property type="project" value="Reactome"/>
</dbReference>
<dbReference type="GO" id="GO:0005654">
    <property type="term" value="C:nucleoplasm"/>
    <property type="evidence" value="ECO:0000304"/>
    <property type="project" value="Reactome"/>
</dbReference>
<dbReference type="GO" id="GO:0000932">
    <property type="term" value="C:P-body"/>
    <property type="evidence" value="ECO:0000314"/>
    <property type="project" value="UniProtKB"/>
</dbReference>
<dbReference type="GO" id="GO:0005839">
    <property type="term" value="C:proteasome core complex"/>
    <property type="evidence" value="ECO:0000314"/>
    <property type="project" value="UniProtKB"/>
</dbReference>
<dbReference type="GO" id="GO:0019773">
    <property type="term" value="C:proteasome core complex, alpha-subunit complex"/>
    <property type="evidence" value="ECO:0000250"/>
    <property type="project" value="UniProtKB"/>
</dbReference>
<dbReference type="GO" id="GO:0009615">
    <property type="term" value="P:response to virus"/>
    <property type="evidence" value="ECO:0007669"/>
    <property type="project" value="Ensembl"/>
</dbReference>
<dbReference type="GO" id="GO:0006511">
    <property type="term" value="P:ubiquitin-dependent protein catabolic process"/>
    <property type="evidence" value="ECO:0007669"/>
    <property type="project" value="InterPro"/>
</dbReference>
<dbReference type="CDD" id="cd03750">
    <property type="entry name" value="proteasome_alpha_type_2"/>
    <property type="match status" value="1"/>
</dbReference>
<dbReference type="FunFam" id="3.60.20.10:FF:000012">
    <property type="entry name" value="Proteasome subunit alpha type"/>
    <property type="match status" value="1"/>
</dbReference>
<dbReference type="Gene3D" id="3.60.20.10">
    <property type="entry name" value="Glutamine Phosphoribosylpyrophosphate, subunit 1, domain 1"/>
    <property type="match status" value="1"/>
</dbReference>
<dbReference type="InterPro" id="IPR029055">
    <property type="entry name" value="Ntn_hydrolases_N"/>
</dbReference>
<dbReference type="InterPro" id="IPR050115">
    <property type="entry name" value="Proteasome_alpha"/>
</dbReference>
<dbReference type="InterPro" id="IPR023332">
    <property type="entry name" value="Proteasome_alpha-type"/>
</dbReference>
<dbReference type="InterPro" id="IPR000426">
    <property type="entry name" value="Proteasome_asu_N"/>
</dbReference>
<dbReference type="InterPro" id="IPR001353">
    <property type="entry name" value="Proteasome_sua/b"/>
</dbReference>
<dbReference type="NCBIfam" id="NF003075">
    <property type="entry name" value="PRK03996.1"/>
    <property type="match status" value="1"/>
</dbReference>
<dbReference type="PANTHER" id="PTHR11599">
    <property type="entry name" value="PROTEASOME SUBUNIT ALPHA/BETA"/>
    <property type="match status" value="1"/>
</dbReference>
<dbReference type="Pfam" id="PF00227">
    <property type="entry name" value="Proteasome"/>
    <property type="match status" value="1"/>
</dbReference>
<dbReference type="Pfam" id="PF10584">
    <property type="entry name" value="Proteasome_A_N"/>
    <property type="match status" value="1"/>
</dbReference>
<dbReference type="SMART" id="SM00948">
    <property type="entry name" value="Proteasome_A_N"/>
    <property type="match status" value="1"/>
</dbReference>
<dbReference type="SUPFAM" id="SSF56235">
    <property type="entry name" value="N-terminal nucleophile aminohydrolases (Ntn hydrolases)"/>
    <property type="match status" value="1"/>
</dbReference>
<dbReference type="PROSITE" id="PS00388">
    <property type="entry name" value="PROTEASOME_ALPHA_1"/>
    <property type="match status" value="1"/>
</dbReference>
<dbReference type="PROSITE" id="PS51475">
    <property type="entry name" value="PROTEASOME_ALPHA_2"/>
    <property type="match status" value="1"/>
</dbReference>
<protein>
    <recommendedName>
        <fullName>Proteasome subunit alpha type-2</fullName>
    </recommendedName>
    <alternativeName>
        <fullName>Macropain subunit C3</fullName>
    </alternativeName>
    <alternativeName>
        <fullName>Multicatalytic endopeptidase complex subunit C3</fullName>
    </alternativeName>
    <alternativeName>
        <fullName>Proteasome component C3</fullName>
    </alternativeName>
    <alternativeName>
        <fullName>Proteasome subunit alpha-2</fullName>
        <shortName>alpha-2</shortName>
    </alternativeName>
</protein>
<proteinExistence type="evidence at protein level"/>
<name>PSA2_MOUSE</name>
<comment type="function">
    <text evidence="4 7">Component of the 20S core proteasome complex involved in the proteolytic degradation of most intracellular proteins. This complex plays numerous essential roles within the cell by associating with different regulatory particles. Associated with two 19S regulatory particles, forms the 26S proteasome and thus participates in the ATP-dependent degradation of ubiquitinated proteins. The 26S proteasome plays a key role in the maintenance of protein homeostasis by removing misfolded or damaged proteins that could impair cellular functions, and by removing proteins whose functions are no longer required. Associated with the PA200 or PA28, the 20S proteasome mediates ubiquitin-independent protein degradation. This type of proteolysis is required in several pathways including spermatogenesis (20S-PA200 complex) or generation of a subset of MHC class I-presented antigenic peptides (20S-PA28 complex).</text>
</comment>
<comment type="subunit">
    <text evidence="5 7">The 26S proteasome consists of a 20S proteasome core and two 19S regulatory subunits. The 20S proteasome core is a barrel-shaped complex made of 28 subunits that are arranged in four stacked rings. The two outer rings are each formed by seven alpha subunits, and the two inner rings are formed by seven beta subunits. The proteolytic activity is exerted by three beta-subunits PSMB5, PSMB6 and PSMB7.</text>
</comment>
<comment type="subcellular location">
    <subcellularLocation>
        <location evidence="6">Cytoplasm</location>
    </subcellularLocation>
    <subcellularLocation>
        <location evidence="6">Nucleus</location>
    </subcellularLocation>
    <text evidence="2 6">Translocated from the cytoplasm into the nucleus following interaction with AKIRIN2, which bridges the proteasome with the nuclear import receptor IPO9 (By similarity). Colocalizes with TRIM5 in cytoplasmic bodies (PubMed:22078707).</text>
</comment>
<comment type="tissue specificity">
    <text evidence="7">Detected in liver (at protein level).</text>
</comment>
<comment type="PTM">
    <text evidence="1">Phosphorylated on tyrosine residues; which may be important for nuclear import.</text>
</comment>
<comment type="similarity">
    <text evidence="3">Belongs to the peptidase T1A family.</text>
</comment>
<evidence type="ECO:0000250" key="1">
    <source>
        <dbReference type="UniProtKB" id="P17220"/>
    </source>
</evidence>
<evidence type="ECO:0000250" key="2">
    <source>
        <dbReference type="UniProtKB" id="P25787"/>
    </source>
</evidence>
<evidence type="ECO:0000255" key="3">
    <source>
        <dbReference type="PROSITE-ProRule" id="PRU00808"/>
    </source>
</evidence>
<evidence type="ECO:0000269" key="4">
    <source>
    </source>
</evidence>
<evidence type="ECO:0000269" key="5">
    <source>
    </source>
</evidence>
<evidence type="ECO:0000269" key="6">
    <source>
    </source>
</evidence>
<evidence type="ECO:0000269" key="7">
    <source>
    </source>
</evidence>
<evidence type="ECO:0000305" key="8"/>
<evidence type="ECO:0000305" key="9">
    <source>
    </source>
</evidence>
<evidence type="ECO:0007744" key="10">
    <source>
    </source>
</evidence>
<evidence type="ECO:0007744" key="11">
    <source>
    </source>
</evidence>
<evidence type="ECO:0007744" key="12">
    <source>
    </source>
</evidence>
<evidence type="ECO:0007829" key="13">
    <source>
        <dbReference type="PDB" id="3UNB"/>
    </source>
</evidence>
<evidence type="ECO:0007829" key="14">
    <source>
        <dbReference type="PDB" id="3UNE"/>
    </source>
</evidence>
<evidence type="ECO:0007829" key="15">
    <source>
        <dbReference type="PDB" id="3UNF"/>
    </source>
</evidence>
<sequence length="234" mass="25927">MAERGYSFSLTTFSPSGKLVQIEYALAAVAGGAPSVGIKAANGVVLATEKKQKSILYDERSVHKVEPITKHIGLVYSGMGPDYRVLVHRARKLAQQYYLVYQEPIPTAQLVQRVASVMQEYTQSGGVRPFGVSLLICGWNEGRPYLFQSDPSGAYFAWKATAMGKNYVNGKTFLEKRYNEDLELEDAIHTAILTLKESFEGQMTEDNIEVGICNEAGFRRLTPTEVRDYLAAIA</sequence>
<keyword id="KW-0002">3D-structure</keyword>
<keyword id="KW-0007">Acetylation</keyword>
<keyword id="KW-0963">Cytoplasm</keyword>
<keyword id="KW-0903">Direct protein sequencing</keyword>
<keyword id="KW-0539">Nucleus</keyword>
<keyword id="KW-0597">Phosphoprotein</keyword>
<keyword id="KW-0647">Proteasome</keyword>
<keyword id="KW-1185">Reference proteome</keyword>